<gene>
    <name type="primary">SEC31</name>
    <name type="ordered locus">CAGL0J08998g</name>
</gene>
<dbReference type="EMBL" id="CR380956">
    <property type="protein sequence ID" value="CAG61051.1"/>
    <property type="molecule type" value="Genomic_DNA"/>
</dbReference>
<dbReference type="RefSeq" id="XP_448100.1">
    <property type="nucleotide sequence ID" value="XM_448100.1"/>
</dbReference>
<dbReference type="SMR" id="Q6FNU4"/>
<dbReference type="FunCoup" id="Q6FNU4">
    <property type="interactions" value="779"/>
</dbReference>
<dbReference type="STRING" id="284593.Q6FNU4"/>
<dbReference type="EnsemblFungi" id="CAGL0J08998g-T">
    <property type="protein sequence ID" value="CAGL0J08998g-T-p1"/>
    <property type="gene ID" value="CAGL0J08998g"/>
</dbReference>
<dbReference type="KEGG" id="cgr:2889475"/>
<dbReference type="CGD" id="CAL0133638">
    <property type="gene designation" value="CAGL0J08998g"/>
</dbReference>
<dbReference type="VEuPathDB" id="FungiDB:CAGL0J08998g"/>
<dbReference type="eggNOG" id="KOG0307">
    <property type="taxonomic scope" value="Eukaryota"/>
</dbReference>
<dbReference type="HOGENOM" id="CLU_003033_2_0_1"/>
<dbReference type="InParanoid" id="Q6FNU4"/>
<dbReference type="OMA" id="AQWAFGG"/>
<dbReference type="Proteomes" id="UP000002428">
    <property type="component" value="Chromosome J"/>
</dbReference>
<dbReference type="GO" id="GO:0030127">
    <property type="term" value="C:COPII vesicle coat"/>
    <property type="evidence" value="ECO:0007669"/>
    <property type="project" value="EnsemblFungi"/>
</dbReference>
<dbReference type="GO" id="GO:0070971">
    <property type="term" value="C:endoplasmic reticulum exit site"/>
    <property type="evidence" value="ECO:0007669"/>
    <property type="project" value="TreeGrafter"/>
</dbReference>
<dbReference type="GO" id="GO:0005789">
    <property type="term" value="C:endoplasmic reticulum membrane"/>
    <property type="evidence" value="ECO:0007669"/>
    <property type="project" value="UniProtKB-SubCell"/>
</dbReference>
<dbReference type="GO" id="GO:0005198">
    <property type="term" value="F:structural molecule activity"/>
    <property type="evidence" value="ECO:0007669"/>
    <property type="project" value="EnsemblFungi"/>
</dbReference>
<dbReference type="GO" id="GO:0090110">
    <property type="term" value="P:COPII-coated vesicle cargo loading"/>
    <property type="evidence" value="ECO:0007669"/>
    <property type="project" value="TreeGrafter"/>
</dbReference>
<dbReference type="GO" id="GO:0007029">
    <property type="term" value="P:endoplasmic reticulum organization"/>
    <property type="evidence" value="ECO:0007669"/>
    <property type="project" value="TreeGrafter"/>
</dbReference>
<dbReference type="GO" id="GO:1902953">
    <property type="term" value="P:positive regulation of ER to Golgi vesicle-mediated transport"/>
    <property type="evidence" value="ECO:0007669"/>
    <property type="project" value="EnsemblFungi"/>
</dbReference>
<dbReference type="GO" id="GO:0070863">
    <property type="term" value="P:positive regulation of protein exit from endoplasmic reticulum"/>
    <property type="evidence" value="ECO:0007669"/>
    <property type="project" value="EnsemblFungi"/>
</dbReference>
<dbReference type="GO" id="GO:0015031">
    <property type="term" value="P:protein transport"/>
    <property type="evidence" value="ECO:0007669"/>
    <property type="project" value="UniProtKB-KW"/>
</dbReference>
<dbReference type="Gene3D" id="1.25.40.980">
    <property type="match status" value="1"/>
</dbReference>
<dbReference type="Gene3D" id="2.20.25.400">
    <property type="match status" value="1"/>
</dbReference>
<dbReference type="Gene3D" id="6.10.140.1600">
    <property type="match status" value="1"/>
</dbReference>
<dbReference type="Gene3D" id="1.20.940.10">
    <property type="entry name" value="Functional domain of the splicing factor Prp18"/>
    <property type="match status" value="1"/>
</dbReference>
<dbReference type="Gene3D" id="2.130.10.10">
    <property type="entry name" value="YVTN repeat-like/Quinoprotein amine dehydrogenase"/>
    <property type="match status" value="1"/>
</dbReference>
<dbReference type="InterPro" id="IPR021614">
    <property type="entry name" value="Sec31"/>
</dbReference>
<dbReference type="InterPro" id="IPR040251">
    <property type="entry name" value="SEC31-like"/>
</dbReference>
<dbReference type="InterPro" id="IPR009917">
    <property type="entry name" value="SRA1/Sec31"/>
</dbReference>
<dbReference type="InterPro" id="IPR015943">
    <property type="entry name" value="WD40/YVTN_repeat-like_dom_sf"/>
</dbReference>
<dbReference type="InterPro" id="IPR036322">
    <property type="entry name" value="WD40_repeat_dom_sf"/>
</dbReference>
<dbReference type="InterPro" id="IPR001680">
    <property type="entry name" value="WD40_rpt"/>
</dbReference>
<dbReference type="PANTHER" id="PTHR13923">
    <property type="entry name" value="SEC31-RELATED PROTEIN"/>
    <property type="match status" value="1"/>
</dbReference>
<dbReference type="PANTHER" id="PTHR13923:SF11">
    <property type="entry name" value="SECRETORY 31, ISOFORM D"/>
    <property type="match status" value="1"/>
</dbReference>
<dbReference type="Pfam" id="PF11549">
    <property type="entry name" value="Sec31"/>
    <property type="match status" value="1"/>
</dbReference>
<dbReference type="Pfam" id="PF07304">
    <property type="entry name" value="SRA1"/>
    <property type="match status" value="1"/>
</dbReference>
<dbReference type="Pfam" id="PF00400">
    <property type="entry name" value="WD40"/>
    <property type="match status" value="2"/>
</dbReference>
<dbReference type="SMART" id="SM00320">
    <property type="entry name" value="WD40"/>
    <property type="match status" value="5"/>
</dbReference>
<dbReference type="SUPFAM" id="SSF47938">
    <property type="entry name" value="Functional domain of the splicing factor Prp18"/>
    <property type="match status" value="1"/>
</dbReference>
<dbReference type="SUPFAM" id="SSF50978">
    <property type="entry name" value="WD40 repeat-like"/>
    <property type="match status" value="1"/>
</dbReference>
<dbReference type="PROSITE" id="PS50082">
    <property type="entry name" value="WD_REPEATS_2"/>
    <property type="match status" value="2"/>
</dbReference>
<dbReference type="PROSITE" id="PS50294">
    <property type="entry name" value="WD_REPEATS_REGION"/>
    <property type="match status" value="1"/>
</dbReference>
<evidence type="ECO:0000250" key="1"/>
<evidence type="ECO:0000255" key="2">
    <source>
        <dbReference type="PROSITE-ProRule" id="PRU00221"/>
    </source>
</evidence>
<evidence type="ECO:0000256" key="3">
    <source>
        <dbReference type="SAM" id="MobiDB-lite"/>
    </source>
</evidence>
<evidence type="ECO:0000305" key="4"/>
<feature type="chain" id="PRO_0000295433" description="Protein transport protein SEC31">
    <location>
        <begin position="1"/>
        <end position="1281"/>
    </location>
</feature>
<feature type="repeat" description="WD 1">
    <location>
        <begin position="5"/>
        <end position="46"/>
    </location>
</feature>
<feature type="repeat" description="WD 2">
    <location>
        <begin position="60"/>
        <end position="99"/>
    </location>
</feature>
<feature type="repeat" description="WD 3">
    <location>
        <begin position="106"/>
        <end position="146"/>
    </location>
</feature>
<feature type="repeat" description="WD 4">
    <location>
        <begin position="158"/>
        <end position="198"/>
    </location>
</feature>
<feature type="repeat" description="WD 5">
    <location>
        <begin position="207"/>
        <end position="250"/>
    </location>
</feature>
<feature type="repeat" description="WD 6">
    <location>
        <begin position="261"/>
        <end position="301"/>
    </location>
</feature>
<feature type="repeat" description="WD 7">
    <location>
        <begin position="329"/>
        <end position="371"/>
    </location>
</feature>
<feature type="repeat" description="WD 8; interaction with SEC13" evidence="2">
    <location>
        <begin position="392"/>
        <end position="412"/>
    </location>
</feature>
<feature type="region of interest" description="Disordered" evidence="3">
    <location>
        <begin position="960"/>
        <end position="991"/>
    </location>
</feature>
<feature type="region of interest" description="Disordered" evidence="3">
    <location>
        <begin position="1010"/>
        <end position="1157"/>
    </location>
</feature>
<feature type="compositionally biased region" description="Polar residues" evidence="3">
    <location>
        <begin position="1037"/>
        <end position="1047"/>
    </location>
</feature>
<feature type="compositionally biased region" description="Polar residues" evidence="3">
    <location>
        <begin position="1118"/>
        <end position="1129"/>
    </location>
</feature>
<comment type="function">
    <text evidence="1">Component of the coat protein complex II (COPII) which promotes the formation of transport vesicles from the endoplasmic reticulum (ER). The coat has two main functions, the physical deformation of the endoplasmic reticulum membrane into vesicles and the selection of cargo molecules (By similarity).</text>
</comment>
<comment type="subunit">
    <text evidence="1">The COPII coat is composed of at least 5 proteins: the SEC23/24 complex, the SEC13/31 complex, and the protein SAR1. SEC13 and SEC31 make a 2:2 tetramer that forms the edge element of the COPII outer coat. The tetramer self-assembles in multiple copies to form the complete polyhedral cage. Interacts (via WD 8) with SEC13 (By similarity).</text>
</comment>
<comment type="subcellular location">
    <subcellularLocation>
        <location evidence="1">Cytoplasmic vesicle</location>
        <location evidence="1">COPII-coated vesicle membrane</location>
        <topology evidence="1">Peripheral membrane protein</topology>
        <orientation evidence="1">Cytoplasmic side</orientation>
    </subcellularLocation>
    <subcellularLocation>
        <location evidence="1">Endoplasmic reticulum membrane</location>
        <topology evidence="1">Peripheral membrane protein</topology>
        <orientation evidence="1">Cytoplasmic side</orientation>
    </subcellularLocation>
</comment>
<comment type="similarity">
    <text evidence="4">Belongs to the WD repeat SEC31 family.</text>
</comment>
<protein>
    <recommendedName>
        <fullName>Protein transport protein SEC31</fullName>
    </recommendedName>
</protein>
<proteinExistence type="inferred from homology"/>
<reference key="1">
    <citation type="journal article" date="2004" name="Nature">
        <title>Genome evolution in yeasts.</title>
        <authorList>
            <person name="Dujon B."/>
            <person name="Sherman D."/>
            <person name="Fischer G."/>
            <person name="Durrens P."/>
            <person name="Casaregola S."/>
            <person name="Lafontaine I."/>
            <person name="de Montigny J."/>
            <person name="Marck C."/>
            <person name="Neuveglise C."/>
            <person name="Talla E."/>
            <person name="Goffard N."/>
            <person name="Frangeul L."/>
            <person name="Aigle M."/>
            <person name="Anthouard V."/>
            <person name="Babour A."/>
            <person name="Barbe V."/>
            <person name="Barnay S."/>
            <person name="Blanchin S."/>
            <person name="Beckerich J.-M."/>
            <person name="Beyne E."/>
            <person name="Bleykasten C."/>
            <person name="Boisrame A."/>
            <person name="Boyer J."/>
            <person name="Cattolico L."/>
            <person name="Confanioleri F."/>
            <person name="de Daruvar A."/>
            <person name="Despons L."/>
            <person name="Fabre E."/>
            <person name="Fairhead C."/>
            <person name="Ferry-Dumazet H."/>
            <person name="Groppi A."/>
            <person name="Hantraye F."/>
            <person name="Hennequin C."/>
            <person name="Jauniaux N."/>
            <person name="Joyet P."/>
            <person name="Kachouri R."/>
            <person name="Kerrest A."/>
            <person name="Koszul R."/>
            <person name="Lemaire M."/>
            <person name="Lesur I."/>
            <person name="Ma L."/>
            <person name="Muller H."/>
            <person name="Nicaud J.-M."/>
            <person name="Nikolski M."/>
            <person name="Oztas S."/>
            <person name="Ozier-Kalogeropoulos O."/>
            <person name="Pellenz S."/>
            <person name="Potier S."/>
            <person name="Richard G.-F."/>
            <person name="Straub M.-L."/>
            <person name="Suleau A."/>
            <person name="Swennen D."/>
            <person name="Tekaia F."/>
            <person name="Wesolowski-Louvel M."/>
            <person name="Westhof E."/>
            <person name="Wirth B."/>
            <person name="Zeniou-Meyer M."/>
            <person name="Zivanovic Y."/>
            <person name="Bolotin-Fukuhara M."/>
            <person name="Thierry A."/>
            <person name="Bouchier C."/>
            <person name="Caudron B."/>
            <person name="Scarpelli C."/>
            <person name="Gaillardin C."/>
            <person name="Weissenbach J."/>
            <person name="Wincker P."/>
            <person name="Souciet J.-L."/>
        </authorList>
    </citation>
    <scope>NUCLEOTIDE SEQUENCE [LARGE SCALE GENOMIC DNA]</scope>
    <source>
        <strain>ATCC 2001 / BCRC 20586 / JCM 3761 / NBRC 0622 / NRRL Y-65 / CBS 138</strain>
    </source>
</reference>
<keyword id="KW-0968">Cytoplasmic vesicle</keyword>
<keyword id="KW-0256">Endoplasmic reticulum</keyword>
<keyword id="KW-0931">ER-Golgi transport</keyword>
<keyword id="KW-0472">Membrane</keyword>
<keyword id="KW-0653">Protein transport</keyword>
<keyword id="KW-1185">Reference proteome</keyword>
<keyword id="KW-0677">Repeat</keyword>
<keyword id="KW-0813">Transport</keyword>
<keyword id="KW-0853">WD repeat</keyword>
<name>SEC31_CANGA</name>
<accession>Q6FNU4</accession>
<organism>
    <name type="scientific">Candida glabrata (strain ATCC 2001 / BCRC 20586 / JCM 3761 / NBRC 0622 / NRRL Y-65 / CBS 138)</name>
    <name type="common">Yeast</name>
    <name type="synonym">Nakaseomyces glabratus</name>
    <dbReference type="NCBI Taxonomy" id="284593"/>
    <lineage>
        <taxon>Eukaryota</taxon>
        <taxon>Fungi</taxon>
        <taxon>Dikarya</taxon>
        <taxon>Ascomycota</taxon>
        <taxon>Saccharomycotina</taxon>
        <taxon>Saccharomycetes</taxon>
        <taxon>Saccharomycetales</taxon>
        <taxon>Saccharomycetaceae</taxon>
        <taxon>Nakaseomyces</taxon>
    </lineage>
</organism>
<sequence length="1281" mass="139375">MVRIAEYSRTATFAWSNDRIPYLVSGTASGTIDADFSNESKLELWSLLGTDADKPSHSVSTDAKFKDLDWSADNKYIAGAMDNGAVEIYEFNSSKQELKKQGSFKNHSTVVRTVKFNSKQNNVLLSGGNSQEIFIWDLNKLLDSKANYQPLTPGVSMSPIDEIHSLSWNKSLAHVFASASNSSFASIWDLKAKKEVIHLSYTSQNTGLKSDFSAVEWHPLNSTRVATATSNDNEPLILVWDLRNSNTPLQTLSAANNQGHGHSKGILSLDWCQQDENLLLSSARDSSVMLWNPQSGEALTEYNTTGNWCFKSKFAPQAPDLFAFATLDGKKIEVQTLQNYETTLDEEVSKTKQQESETDFWNHVSEEKAEIKSTVVHLQAPSWYGNKSASAQWAFGGKLVQVTKDGKGVEVNKPEITDLKSDDTLKNALASKDFQPLINQRLVKVVNETNEEDWNLLEKLSMDGKEEFLKEALELDEEEDEEKDQEGKDGDEFFQKIESNFQPSGSFKIDSNEESVINNILSGNNSKAVSELLKSGSILEAFVVAVTCNDEKLKEDVKDAYFAAHGKESSLSRVLFSSSKKNSDDIVENLDISQWKYITKSIYNFHANDEVERTNKLLQLGDRLLANKNRQDALVIYIAAGSLDKIATVWLNEFSTLENKIKDQEKTIYEAHIECLTEFVERFTILSNFVGKKQKITNESLISKFLEFINITSATGNFDLALLFLDILPEDNEYVIAEKKRVMVASGKVVDQSQSRKGKYGSHANLASAGFSGHAKQPVNLPPTAAPFAAQTMGGYAPQAVGAVPTPAVPVPQTRNASVSIKSNPYGPAGTNVGTSDNKFNAYAPPTHTQVPVATPVTSSFIPPANPYSNVAAQSLAMAAEQNAMSPNLAGSAPPVKSPSVYSGQTPHLNKKANDGWNDLALPVKEKPQRAKPVTVAPSPILAPATNGAAAAVPTKSIGTVFPPTGGNSRVPSSMVSPPPPQKRASRTPSLINIDDVVNARPKAHTSIYAPQTTQAGPAPVAPQSDIPLAPTANPYAPNQSVGSTPLQKPVNPYAPPAQQAGIPSAANPYASQIPSKAPVNAPPPMSSKKAPVGPPPMSSRKKAHEGKTLSHEAASVLDSSKPVQTQPIASELSREPAPVPTSASQTQVPPPVQETPARNTISPIDMAAPAVEQGISAAQQPIRDFFSSELARVTPLTPKEYNKQLKDCDKRLKILFTHLEKNLLSQPTVDKLLHIIELLKEKKYHEAMEVHKDIATNHAEEGGNWLTGVKRLISISEATA</sequence>